<proteinExistence type="inferred from homology"/>
<reference key="1">
    <citation type="submission" date="2003-03" db="EMBL/GenBank/DDBJ databases">
        <title>African swine fever virus genomes.</title>
        <authorList>
            <person name="Kutish G.F."/>
            <person name="Rock D.L."/>
        </authorList>
    </citation>
    <scope>NUCLEOTIDE SEQUENCE [LARGE SCALE GENOMIC DNA]</scope>
</reference>
<name>VF129_ASFK5</name>
<organism>
    <name type="scientific">African swine fever virus (isolate Pig/Kenya/KEN-50/1950)</name>
    <name type="common">ASFV</name>
    <dbReference type="NCBI Taxonomy" id="561445"/>
    <lineage>
        <taxon>Viruses</taxon>
        <taxon>Varidnaviria</taxon>
        <taxon>Bamfordvirae</taxon>
        <taxon>Nucleocytoviricota</taxon>
        <taxon>Pokkesviricetes</taxon>
        <taxon>Asfuvirales</taxon>
        <taxon>Asfarviridae</taxon>
        <taxon>Asfivirus</taxon>
        <taxon>African swine fever virus</taxon>
    </lineage>
</organism>
<keyword id="KW-0945">Host-virus interaction</keyword>
<keyword id="KW-0378">Hydrolase</keyword>
<keyword id="KW-1090">Inhibition of host innate immune response by virus</keyword>
<keyword id="KW-1114">Inhibition of host interferon signaling pathway by virus</keyword>
<keyword id="KW-0922">Interferon antiviral system evasion</keyword>
<keyword id="KW-0899">Viral immunoevasion</keyword>
<keyword id="KW-0946">Virion</keyword>
<dbReference type="EC" id="3.1.4.-" evidence="1"/>
<dbReference type="EMBL" id="AY261360">
    <property type="status" value="NOT_ANNOTATED_CDS"/>
    <property type="molecule type" value="Genomic_DNA"/>
</dbReference>
<dbReference type="Proteomes" id="UP000000861">
    <property type="component" value="Segment"/>
</dbReference>
<dbReference type="GO" id="GO:0044423">
    <property type="term" value="C:virion component"/>
    <property type="evidence" value="ECO:0007669"/>
    <property type="project" value="UniProtKB-KW"/>
</dbReference>
<dbReference type="GO" id="GO:0016787">
    <property type="term" value="F:hydrolase activity"/>
    <property type="evidence" value="ECO:0007669"/>
    <property type="project" value="UniProtKB-KW"/>
</dbReference>
<dbReference type="GO" id="GO:0052170">
    <property type="term" value="P:symbiont-mediated suppression of host innate immune response"/>
    <property type="evidence" value="ECO:0007669"/>
    <property type="project" value="UniProtKB-KW"/>
</dbReference>
<dbReference type="GO" id="GO:0039502">
    <property type="term" value="P:symbiont-mediated suppression of host type I interferon-mediated signaling pathway"/>
    <property type="evidence" value="ECO:0007669"/>
    <property type="project" value="UniProtKB-KW"/>
</dbReference>
<evidence type="ECO:0000250" key="1">
    <source>
        <dbReference type="UniProtKB" id="Q65154"/>
    </source>
</evidence>
<evidence type="ECO:0000305" key="2"/>
<feature type="chain" id="PRO_0000373506" description="Uncharacterized protein C129R">
    <location>
        <begin position="1"/>
        <end position="129"/>
    </location>
</feature>
<sequence length="129" mass="15068">MEHPSTNYTPEQQHEKLKHYILIPRHLWCYIKYGTHVRYYTTQNVFRVGGFVLQNPYEAVIKNEVKTAIRLQNSFNTKAKGHVTWTVPYDDISKLYAKPDAIMLTIQENVEKALHALNQNVLTLAAKIR</sequence>
<organismHost>
    <name type="scientific">Ornithodoros</name>
    <name type="common">relapsing fever ticks</name>
    <dbReference type="NCBI Taxonomy" id="6937"/>
</organismHost>
<organismHost>
    <name type="scientific">Phacochoerus aethiopicus</name>
    <name type="common">Warthog</name>
    <dbReference type="NCBI Taxonomy" id="85517"/>
</organismHost>
<organismHost>
    <name type="scientific">Phacochoerus africanus</name>
    <name type="common">Warthog</name>
    <dbReference type="NCBI Taxonomy" id="41426"/>
</organismHost>
<organismHost>
    <name type="scientific">Potamochoerus larvatus</name>
    <name type="common">Bushpig</name>
    <dbReference type="NCBI Taxonomy" id="273792"/>
</organismHost>
<organismHost>
    <name type="scientific">Sus scrofa</name>
    <name type="common">Pig</name>
    <dbReference type="NCBI Taxonomy" id="9823"/>
</organismHost>
<comment type="function">
    <text evidence="1">Plays a role in the inhibition of type I interferon signaling pathway. Mechanistically, specifically interacts with 2',3'-cGAMP and cleaves it via its phosphodiesterase activity. In turn, prevents 2',3'-cGAMP interaction with host ER-resident STING1 leading to inhibition of downstream signaling pathway and type I interferon production.</text>
</comment>
<comment type="subcellular location">
    <subcellularLocation>
        <location evidence="1">Virion</location>
    </subcellularLocation>
</comment>
<comment type="similarity">
    <text evidence="2">Belongs to the asfivirus C129R family.</text>
</comment>
<accession>P0CA36</accession>
<gene>
    <name type="ordered locus">Ken-074</name>
</gene>
<protein>
    <recommendedName>
        <fullName>Uncharacterized protein C129R</fullName>
        <shortName>pC129R</shortName>
        <ecNumber evidence="1">3.1.4.-</ecNumber>
    </recommendedName>
</protein>